<gene>
    <name type="ORF">ORF19</name>
</gene>
<organism>
    <name type="scientific">Ostreid herpesvirus 1 (isolate France)</name>
    <name type="common">OsHV-1</name>
    <name type="synonym">Pacific oyster herpesvirus</name>
    <dbReference type="NCBI Taxonomy" id="654903"/>
    <lineage>
        <taxon>Viruses</taxon>
        <taxon>Duplodnaviria</taxon>
        <taxon>Heunggongvirae</taxon>
        <taxon>Peploviricota</taxon>
        <taxon>Herviviricetes</taxon>
        <taxon>Herpesvirales</taxon>
        <taxon>Malacoherpesviridae</taxon>
        <taxon>Ostreavirus</taxon>
        <taxon>Ostreavirus ostreidmalaco1</taxon>
        <taxon>Ostreid herpesvirus 1</taxon>
    </lineage>
</organism>
<reference key="1">
    <citation type="journal article" date="2005" name="J. Gen. Virol.">
        <title>A novel class of herpesvirus with bivalve hosts.</title>
        <authorList>
            <person name="Davison A.J."/>
            <person name="Trus B.L."/>
            <person name="Cheng N."/>
            <person name="Steven A.C."/>
            <person name="Watson M.S."/>
            <person name="Cunningham C."/>
            <person name="Le Deuff R.M."/>
            <person name="Renault T."/>
        </authorList>
    </citation>
    <scope>NUCLEOTIDE SEQUENCE [LARGE SCALE GENOMIC DNA]</scope>
</reference>
<protein>
    <recommendedName>
        <fullName>Uncharacterized protein ORF19</fullName>
    </recommendedName>
</protein>
<organismHost>
    <name type="scientific">Magallana gigas</name>
    <name type="common">Pacific oyster</name>
    <name type="synonym">Crassostrea gigas</name>
    <dbReference type="NCBI Taxonomy" id="29159"/>
</organismHost>
<organismHost>
    <name type="scientific">Pecten maximus</name>
    <name type="common">King scallop</name>
    <name type="synonym">Pilgrim's clam</name>
    <dbReference type="NCBI Taxonomy" id="6579"/>
</organismHost>
<proteinExistence type="predicted"/>
<accession>Q6R7K4</accession>
<dbReference type="EMBL" id="AY509253">
    <property type="protein sequence ID" value="AAS00911.1"/>
    <property type="molecule type" value="Genomic_DNA"/>
</dbReference>
<dbReference type="RefSeq" id="YP_024564.1">
    <property type="nucleotide sequence ID" value="NC_005881.2"/>
</dbReference>
<dbReference type="KEGG" id="vg:2948210"/>
<dbReference type="Proteomes" id="UP000007021">
    <property type="component" value="Segment"/>
</dbReference>
<keyword id="KW-1185">Reference proteome</keyword>
<feature type="chain" id="PRO_0000385051" description="Uncharacterized protein ORF19">
    <location>
        <begin position="1"/>
        <end position="402"/>
    </location>
</feature>
<name>Y019_OSHVF</name>
<sequence>MITCFHSNKNCKTKSIKHSTIILLTMAHIEELTTTDVADALLSELVINHTDLRNKVYEVINDNTSSSLDNLYDVAKALAGSQFIVKKIRIYTKESRKEVWTRLIAGHLPSMIITPFFNAMFPASEIKISTFAEMANKKDLTEEVTIPTLSIVDGFDMKFSEVEHKLISSVLSVCRKVIFINNPAKDYSEQHAERIKLLTCGGKIMTYINRFFMKIKKGVSISAVPLIGDMSLCMLINGLGSSQTNFPPARVSFHITYDVKSRTDMLRIGCGGVISNVFSFDSLGNLTVHKESNKHGYVAIVMDKSLFDKKTSLEINNMMTDVCWEHIEQLKPYPKDYVKVGLLHLESVEFNDQQYYLPVVKRKLPSMFTAVSGRIAGNNFYSMFKDVCLPLPPSSLDGKDVM</sequence>